<protein>
    <recommendedName>
        <fullName>Histone H2A.Z</fullName>
    </recommendedName>
</protein>
<accession>Q4WE68</accession>
<sequence length="138" mass="14790">MPGGKGKSVGGKAGAKDAAGKTQKSHSAKAGLQFPCGRVKRFLKNNTQNKMRVGAKAAVYVTAVLEYLTAEVLELAGNAAKDLKVKRITPRHLQLAIRGDEELDTLIRATIAFGGVLPRINRALLLKVEQKKKNKSDA</sequence>
<reference key="1">
    <citation type="journal article" date="2005" name="Nature">
        <title>Genomic sequence of the pathogenic and allergenic filamentous fungus Aspergillus fumigatus.</title>
        <authorList>
            <person name="Nierman W.C."/>
            <person name="Pain A."/>
            <person name="Anderson M.J."/>
            <person name="Wortman J.R."/>
            <person name="Kim H.S."/>
            <person name="Arroyo J."/>
            <person name="Berriman M."/>
            <person name="Abe K."/>
            <person name="Archer D.B."/>
            <person name="Bermejo C."/>
            <person name="Bennett J.W."/>
            <person name="Bowyer P."/>
            <person name="Chen D."/>
            <person name="Collins M."/>
            <person name="Coulsen R."/>
            <person name="Davies R."/>
            <person name="Dyer P.S."/>
            <person name="Farman M.L."/>
            <person name="Fedorova N."/>
            <person name="Fedorova N.D."/>
            <person name="Feldblyum T.V."/>
            <person name="Fischer R."/>
            <person name="Fosker N."/>
            <person name="Fraser A."/>
            <person name="Garcia J.L."/>
            <person name="Garcia M.J."/>
            <person name="Goble A."/>
            <person name="Goldman G.H."/>
            <person name="Gomi K."/>
            <person name="Griffith-Jones S."/>
            <person name="Gwilliam R."/>
            <person name="Haas B.J."/>
            <person name="Haas H."/>
            <person name="Harris D.E."/>
            <person name="Horiuchi H."/>
            <person name="Huang J."/>
            <person name="Humphray S."/>
            <person name="Jimenez J."/>
            <person name="Keller N."/>
            <person name="Khouri H."/>
            <person name="Kitamoto K."/>
            <person name="Kobayashi T."/>
            <person name="Konzack S."/>
            <person name="Kulkarni R."/>
            <person name="Kumagai T."/>
            <person name="Lafton A."/>
            <person name="Latge J.-P."/>
            <person name="Li W."/>
            <person name="Lord A."/>
            <person name="Lu C."/>
            <person name="Majoros W.H."/>
            <person name="May G.S."/>
            <person name="Miller B.L."/>
            <person name="Mohamoud Y."/>
            <person name="Molina M."/>
            <person name="Monod M."/>
            <person name="Mouyna I."/>
            <person name="Mulligan S."/>
            <person name="Murphy L.D."/>
            <person name="O'Neil S."/>
            <person name="Paulsen I."/>
            <person name="Penalva M.A."/>
            <person name="Pertea M."/>
            <person name="Price C."/>
            <person name="Pritchard B.L."/>
            <person name="Quail M.A."/>
            <person name="Rabbinowitsch E."/>
            <person name="Rawlins N."/>
            <person name="Rajandream M.A."/>
            <person name="Reichard U."/>
            <person name="Renauld H."/>
            <person name="Robson G.D."/>
            <person name="Rodriguez de Cordoba S."/>
            <person name="Rodriguez-Pena J.M."/>
            <person name="Ronning C.M."/>
            <person name="Rutter S."/>
            <person name="Salzberg S.L."/>
            <person name="Sanchez M."/>
            <person name="Sanchez-Ferrero J.C."/>
            <person name="Saunders D."/>
            <person name="Seeger K."/>
            <person name="Squares R."/>
            <person name="Squares S."/>
            <person name="Takeuchi M."/>
            <person name="Tekaia F."/>
            <person name="Turner G."/>
            <person name="Vazquez de Aldana C.R."/>
            <person name="Weidman J."/>
            <person name="White O."/>
            <person name="Woodward J.R."/>
            <person name="Yu J.-H."/>
            <person name="Fraser C.M."/>
            <person name="Galagan J.E."/>
            <person name="Asai K."/>
            <person name="Machida M."/>
            <person name="Hall N."/>
            <person name="Barrell B.G."/>
            <person name="Denning D.W."/>
        </authorList>
    </citation>
    <scope>NUCLEOTIDE SEQUENCE [LARGE SCALE GENOMIC DNA]</scope>
    <source>
        <strain>ATCC MYA-4609 / CBS 101355 / FGSC A1100 / Af293</strain>
    </source>
</reference>
<keyword id="KW-0007">Acetylation</keyword>
<keyword id="KW-0010">Activator</keyword>
<keyword id="KW-0156">Chromatin regulator</keyword>
<keyword id="KW-0158">Chromosome</keyword>
<keyword id="KW-0238">DNA-binding</keyword>
<keyword id="KW-0544">Nucleosome core</keyword>
<keyword id="KW-0539">Nucleus</keyword>
<keyword id="KW-1185">Reference proteome</keyword>
<keyword id="KW-0804">Transcription</keyword>
<keyword id="KW-0805">Transcription regulation</keyword>
<dbReference type="EMBL" id="AAHF01000011">
    <property type="protein sequence ID" value="EAL86109.1"/>
    <property type="molecule type" value="Genomic_DNA"/>
</dbReference>
<dbReference type="RefSeq" id="XP_748147.1">
    <property type="nucleotide sequence ID" value="XM_743054.1"/>
</dbReference>
<dbReference type="SMR" id="Q4WE68"/>
<dbReference type="FunCoup" id="Q4WE68">
    <property type="interactions" value="1028"/>
</dbReference>
<dbReference type="STRING" id="330879.Q4WE68"/>
<dbReference type="EnsemblFungi" id="EAL86109">
    <property type="protein sequence ID" value="EAL86109"/>
    <property type="gene ID" value="AFUA_5G01950"/>
</dbReference>
<dbReference type="GeneID" id="3505547"/>
<dbReference type="KEGG" id="afm:AFUA_5G01950"/>
<dbReference type="VEuPathDB" id="FungiDB:Afu5g01950"/>
<dbReference type="eggNOG" id="KOG1757">
    <property type="taxonomic scope" value="Eukaryota"/>
</dbReference>
<dbReference type="HOGENOM" id="CLU_062828_2_1_1"/>
<dbReference type="InParanoid" id="Q4WE68"/>
<dbReference type="OMA" id="MNKKGAP"/>
<dbReference type="OrthoDB" id="9421954at2759"/>
<dbReference type="Proteomes" id="UP000002530">
    <property type="component" value="Chromosome 5"/>
</dbReference>
<dbReference type="GO" id="GO:0000791">
    <property type="term" value="C:euchromatin"/>
    <property type="evidence" value="ECO:0007669"/>
    <property type="project" value="EnsemblFungi"/>
</dbReference>
<dbReference type="GO" id="GO:0000786">
    <property type="term" value="C:nucleosome"/>
    <property type="evidence" value="ECO:0000318"/>
    <property type="project" value="GO_Central"/>
</dbReference>
<dbReference type="GO" id="GO:0005634">
    <property type="term" value="C:nucleus"/>
    <property type="evidence" value="ECO:0000318"/>
    <property type="project" value="GO_Central"/>
</dbReference>
<dbReference type="GO" id="GO:0031490">
    <property type="term" value="F:chromatin DNA binding"/>
    <property type="evidence" value="ECO:0007669"/>
    <property type="project" value="EnsemblFungi"/>
</dbReference>
<dbReference type="GO" id="GO:0042802">
    <property type="term" value="F:identical protein binding"/>
    <property type="evidence" value="ECO:0007669"/>
    <property type="project" value="EnsemblFungi"/>
</dbReference>
<dbReference type="GO" id="GO:0046982">
    <property type="term" value="F:protein heterodimerization activity"/>
    <property type="evidence" value="ECO:0007669"/>
    <property type="project" value="InterPro"/>
</dbReference>
<dbReference type="GO" id="GO:0000978">
    <property type="term" value="F:RNA polymerase II cis-regulatory region sequence-specific DNA binding"/>
    <property type="evidence" value="ECO:0007669"/>
    <property type="project" value="EnsemblFungi"/>
</dbReference>
<dbReference type="GO" id="GO:0030527">
    <property type="term" value="F:structural constituent of chromatin"/>
    <property type="evidence" value="ECO:0000318"/>
    <property type="project" value="GO_Central"/>
</dbReference>
<dbReference type="GO" id="GO:0140898">
    <property type="term" value="P:CENP-A eviction from euchromatin"/>
    <property type="evidence" value="ECO:0007669"/>
    <property type="project" value="EnsemblFungi"/>
</dbReference>
<dbReference type="GO" id="GO:0031507">
    <property type="term" value="P:heterochromatin formation"/>
    <property type="evidence" value="ECO:0000318"/>
    <property type="project" value="GO_Central"/>
</dbReference>
<dbReference type="GO" id="GO:0070481">
    <property type="term" value="P:nuclear-transcribed mRNA catabolic process, non-stop decay"/>
    <property type="evidence" value="ECO:0007669"/>
    <property type="project" value="EnsemblFungi"/>
</dbReference>
<dbReference type="GO" id="GO:0006357">
    <property type="term" value="P:regulation of transcription by RNA polymerase II"/>
    <property type="evidence" value="ECO:0007669"/>
    <property type="project" value="EnsemblFungi"/>
</dbReference>
<dbReference type="GO" id="GO:0030466">
    <property type="term" value="P:silent mating-type cassette heterochromatin formation"/>
    <property type="evidence" value="ECO:0007669"/>
    <property type="project" value="EnsemblFungi"/>
</dbReference>
<dbReference type="GO" id="GO:0006368">
    <property type="term" value="P:transcription elongation by RNA polymerase II"/>
    <property type="evidence" value="ECO:0007669"/>
    <property type="project" value="EnsemblFungi"/>
</dbReference>
<dbReference type="CDD" id="cd00074">
    <property type="entry name" value="HFD_H2A"/>
    <property type="match status" value="1"/>
</dbReference>
<dbReference type="FunFam" id="1.10.20.10:FF:000021">
    <property type="entry name" value="Histone H2A"/>
    <property type="match status" value="1"/>
</dbReference>
<dbReference type="Gene3D" id="1.10.20.10">
    <property type="entry name" value="Histone, subunit A"/>
    <property type="match status" value="1"/>
</dbReference>
<dbReference type="InterPro" id="IPR009072">
    <property type="entry name" value="Histone-fold"/>
</dbReference>
<dbReference type="InterPro" id="IPR002119">
    <property type="entry name" value="Histone_H2A"/>
</dbReference>
<dbReference type="InterPro" id="IPR007125">
    <property type="entry name" value="Histone_H2A/H2B/H3"/>
</dbReference>
<dbReference type="InterPro" id="IPR032454">
    <property type="entry name" value="Histone_H2A_C"/>
</dbReference>
<dbReference type="PANTHER" id="PTHR23430">
    <property type="entry name" value="HISTONE H2A"/>
    <property type="match status" value="1"/>
</dbReference>
<dbReference type="Pfam" id="PF00125">
    <property type="entry name" value="Histone"/>
    <property type="match status" value="1"/>
</dbReference>
<dbReference type="Pfam" id="PF16211">
    <property type="entry name" value="Histone_H2A_C"/>
    <property type="match status" value="1"/>
</dbReference>
<dbReference type="PRINTS" id="PR00620">
    <property type="entry name" value="HISTONEH2A"/>
</dbReference>
<dbReference type="SMART" id="SM00414">
    <property type="entry name" value="H2A"/>
    <property type="match status" value="1"/>
</dbReference>
<dbReference type="SUPFAM" id="SSF47113">
    <property type="entry name" value="Histone-fold"/>
    <property type="match status" value="1"/>
</dbReference>
<gene>
    <name type="primary">htz1</name>
    <name type="ORF">AFUA_5G01950</name>
</gene>
<evidence type="ECO:0000250" key="1"/>
<evidence type="ECO:0000256" key="2">
    <source>
        <dbReference type="SAM" id="MobiDB-lite"/>
    </source>
</evidence>
<evidence type="ECO:0000305" key="3"/>
<name>H2AZ_ASPFU</name>
<proteinExistence type="inferred from homology"/>
<comment type="function">
    <text evidence="1">Variant histone H2A which can replace H2A in some nucleosomes. Nucleosomes wrap and compact DNA into chromatin, limiting DNA accessibility to the cellular machineries which require DNA as a template. Histones thereby play a central role in transcription regulation, DNA repair, DNA replication and chromosomal stability. DNA accessibility is regulated via a complex set of post-translational modifications of histones, also called histone code, and nucleosome remodeling. This variant is enriched at promoters, it may keep them in a repressed state until the appropriate activation signal is received. Near telomeres, it may counteract gene silencing caused by the spread of heterochromatin proteins. Required for the RNA polymerase II and spt15/TBP recruitment to the target genes. Involved in chromosome stability (By similarity).</text>
</comment>
<comment type="subunit">
    <text evidence="1">The nucleosome is a histone octamer containing two molecules each of H2A, H2B, H3 and H4 assembled in one H3-H4 heterotetramer and two H2A-H2B heterodimers. The octamer wraps approximately 147 bp of DNA. H2A or its variant H2A.Z forms a heterodimer with H2B. H2A.Z associates with the vps72/swc2 subunit of the SWR1 chromatin remodeling complex. Also interacts with rbp1/DNA-directed RNA polymerase II largest subunit (By similarity).</text>
</comment>
<comment type="subcellular location">
    <subcellularLocation>
        <location evidence="1">Nucleus</location>
    </subcellularLocation>
    <subcellularLocation>
        <location evidence="1">Chromosome</location>
    </subcellularLocation>
</comment>
<comment type="PTM">
    <text evidence="1">Acetylated once deposited into chromatin.</text>
</comment>
<comment type="similarity">
    <text evidence="3">Belongs to the histone H2A family.</text>
</comment>
<organism>
    <name type="scientific">Aspergillus fumigatus (strain ATCC MYA-4609 / CBS 101355 / FGSC A1100 / Af293)</name>
    <name type="common">Neosartorya fumigata</name>
    <dbReference type="NCBI Taxonomy" id="330879"/>
    <lineage>
        <taxon>Eukaryota</taxon>
        <taxon>Fungi</taxon>
        <taxon>Dikarya</taxon>
        <taxon>Ascomycota</taxon>
        <taxon>Pezizomycotina</taxon>
        <taxon>Eurotiomycetes</taxon>
        <taxon>Eurotiomycetidae</taxon>
        <taxon>Eurotiales</taxon>
        <taxon>Aspergillaceae</taxon>
        <taxon>Aspergillus</taxon>
        <taxon>Aspergillus subgen. Fumigati</taxon>
    </lineage>
</organism>
<feature type="chain" id="PRO_0000055329" description="Histone H2A.Z">
    <location>
        <begin position="1"/>
        <end position="138"/>
    </location>
</feature>
<feature type="region of interest" description="Disordered" evidence="2">
    <location>
        <begin position="1"/>
        <end position="32"/>
    </location>
</feature>
<feature type="compositionally biased region" description="Gly residues" evidence="2">
    <location>
        <begin position="1"/>
        <end position="13"/>
    </location>
</feature>
<feature type="modified residue" description="N6-acetyllysine" evidence="1">
    <location>
        <position position="5"/>
    </location>
</feature>
<feature type="modified residue" description="N6-acetyllysine" evidence="1">
    <location>
        <position position="12"/>
    </location>
</feature>